<comment type="function">
    <molecule>Capsid protein VP1</molecule>
    <text evidence="4">Capsid proteins VP1, VP2, and VP3 form a closed capsid enclosing the viral positive strand RNA genome. All these proteins contain a beta-sheet structure called beta-barrel jelly roll. Together they form an icosahedral capsid (T=3) composed of 60 copies of each VP1, VP2, and VP3, with a diameter of approximately 300 Angstroms. VP1 is situated at the 12 fivefold axes, whereas VP2 and VP3 are located at the quasi-sixfold axes. The naked capsid interacts with the host receptor HAVCR1 to provide virion attachment to and probably entry into the target cell.</text>
</comment>
<comment type="function">
    <molecule>Capsid protein VP2</molecule>
    <text evidence="4">Capsid proteins VP1, VP2, and VP3 form a closed capsid enclosing the viral positive strand RNA genome. All these proteins contain a beta-sheet structure called beta-barrel jelly roll. Together they form an icosahedral capsid (T=3) composed of 60 copies of each VP1, VP2, and VP3, with a diameter of approximately 300 Angstroms. VP1 is situated at the 12 fivefold axes, whereas VP2 and VP3 are located at the quasi-sixfold axes. The naked capsid interacts with the host receptor HAVCR1 to provide virion attachment to and probably entry into the target cell.</text>
</comment>
<comment type="function">
    <molecule>Capsid protein VP3</molecule>
    <text evidence="4">Capsid proteins VP1, VP2, and VP3 form a closed capsid enclosing the viral positive strand RNA genome. All these proteins contain a beta-sheet structure called beta-barrel jelly roll. Together they form an icosahedral capsid (T=3) composed of 60 copies of each VP1, VP2, and VP3, with a diameter of approximately 300 Angstroms. VP1 is situated at the 12 fivefold axes, whereas VP2 and VP3 are located at the quasi-sixfold axes. The naked capsid interacts with the host receptor HAVCR1 to provide virion attachment to and probably entry into the target cell.</text>
</comment>
<comment type="function">
    <molecule>Capsid protein VP0</molecule>
    <text evidence="4">VP0 precursor is a component of the immature procapsids.</text>
</comment>
<comment type="function">
    <molecule>Capsid protein VP4</molecule>
    <text evidence="4">Plays a role in the assembly of the 12 pentamers into an icosahedral structure. Has not been detected in mature virions, supposedly owing to its small size.</text>
</comment>
<comment type="function">
    <molecule>Protein VP1-2A</molecule>
    <text evidence="4">Precursor component of immature procapsids that corresponds to an extended form of the structural protein VP1. After maturation, possibly by the host Cathepsin L, the assembly signal 2A is cleaved to give rise to the mature VP1 protein.</text>
</comment>
<comment type="function">
    <molecule>Protein 2B</molecule>
    <text evidence="4">Functions as a viroporin. Affects membrane integrity and causes an increase in membrane permeability. Involved in host intracellular membrane rearrangements probably to give rise to the viral factories. Does not disrupt calcium homeostasis or glycoprotein trafficking. Antagonizes the innate immune response of the host by suppressing IFN-beta synthesis, which it achieves by interfering with the RIG-I/IFIH1 pathway.</text>
</comment>
<comment type="function">
    <molecule>Protein 2BC</molecule>
    <text evidence="4">Affects membrane integrity and causes an increase in membrane permeability.</text>
</comment>
<comment type="function">
    <molecule>Protein 2C</molecule>
    <text evidence="4">Associates with and induces structural rearrangements of intracellular membranes. Displays RNA-binding activity.</text>
</comment>
<comment type="function">
    <molecule>Protein 3ABC</molecule>
    <text evidence="4">The precursor 3ABC is targeted to the mitochondrial membrane where protease 3C activity cleaves and inhibits the host antiviral protein MAVS, thereby disrupting activation of IRF3 through the IFIH1/MDA5 pathway. In vivo, the protease activity of 3ABC precursor is more efficient in cleaving the 2BC precursor than that of protein 3C. The 3ABC precursor may therefore play a role in the proteolytic processing of the polyprotein. Possible viroporin.</text>
</comment>
<comment type="function">
    <molecule>Protein 3AB</molecule>
    <text evidence="4">Interacts with the 3CD precursor and with RNA structures found at both the 5'- and 3'-termini of the viral genome. Since the 3AB precursor contains the hydrophobic domain 3A, it probably anchors the whole viral replicase complex to intracellular membranes on which viral RNA synthesis occurs.</text>
</comment>
<comment type="function">
    <molecule>Protein 3A</molecule>
    <text evidence="4">May serve as membrane anchor to the 3AB and 3ABC precursors via its hydrophobic domain. May interact with RNA.</text>
</comment>
<comment type="function">
    <molecule>Viral protein genome-linked</molecule>
    <text evidence="2 4">Acts as a primer for viral RNA replication and remains covalently bound to viral genomic RNA. VPg is uridylylated prior to priming replication into VPg-pUpU. The VPg-pUpU is then used as primer on the genomic RNA poly(A) by the RNA-dependent RNA polymerase to replicate the viral genome.</text>
</comment>
<comment type="function">
    <molecule>Protease 3C</molecule>
    <text evidence="4">Cysteine protease that generates mature viral proteins from the precursor polyprotein. In addition to its proteolytic activity, it binds to viral RNA, and thus influences viral genome replication. RNA and substrate bind cooperatively to the protease. Cleaves IKBKG/NEMO to impair innate immune signaling. Cleaves host PABPC1 which may participate in the switch of viral translation to RNA synthesis.</text>
</comment>
<comment type="function">
    <molecule>Protein 3CD</molecule>
    <text evidence="4">Interacts with the 3AB precursor and with RNA structures found at both the 5'- and 3'-termini of the viral genome. Disrupts TLR3 signaling by degrading the host adapter protein TICAM1/TRIF.</text>
</comment>
<comment type="function">
    <text evidence="4">RNA-directed RNA polymerase 3D-POL replicates genomic and antigenomic RNA by recognizing replications specific signals.</text>
</comment>
<comment type="catalytic activity">
    <reaction evidence="4 6">
        <text>RNA(n) + a ribonucleoside 5'-triphosphate = RNA(n+1) + diphosphate</text>
        <dbReference type="Rhea" id="RHEA:21248"/>
        <dbReference type="Rhea" id="RHEA-COMP:14527"/>
        <dbReference type="Rhea" id="RHEA-COMP:17342"/>
        <dbReference type="ChEBI" id="CHEBI:33019"/>
        <dbReference type="ChEBI" id="CHEBI:61557"/>
        <dbReference type="ChEBI" id="CHEBI:140395"/>
        <dbReference type="EC" id="2.7.7.48"/>
    </reaction>
</comment>
<comment type="catalytic activity">
    <reaction evidence="4">
        <text>a ribonucleoside 5'-triphosphate + H2O = a ribonucleoside 5'-diphosphate + phosphate + H(+)</text>
        <dbReference type="Rhea" id="RHEA:23680"/>
        <dbReference type="ChEBI" id="CHEBI:15377"/>
        <dbReference type="ChEBI" id="CHEBI:15378"/>
        <dbReference type="ChEBI" id="CHEBI:43474"/>
        <dbReference type="ChEBI" id="CHEBI:57930"/>
        <dbReference type="ChEBI" id="CHEBI:61557"/>
        <dbReference type="EC" id="3.6.1.15"/>
    </reaction>
</comment>
<comment type="catalytic activity">
    <reaction evidence="8">
        <text>Selective cleavage of Gln-|-Gly bond in the poliovirus polyprotein. In other picornavirus reactions Glu may be substituted for Gln, and Ser or Thr for Gly.</text>
        <dbReference type="EC" id="3.4.22.28"/>
    </reaction>
</comment>
<comment type="subunit">
    <molecule>Protein 2B</molecule>
    <text evidence="4">Homodimer. Homomultimer; probably interacts with membranes in a multimeric form. Seems to assemble into amyloid-like fibers.</text>
</comment>
<comment type="subunit">
    <molecule>Protein 3AB</molecule>
    <text evidence="4">Homodimer. Monomer. Interacts with protein 3CD.</text>
</comment>
<comment type="subunit">
    <molecule>Protein 3A</molecule>
    <text evidence="4">Interacts with host ACBD3 (By similarity).</text>
</comment>
<comment type="subunit">
    <molecule>Protein 3CD</molecule>
    <text evidence="4">Interacts with protein 3AB.</text>
</comment>
<comment type="subunit">
    <molecule>Protein 3ABC</molecule>
    <text evidence="4">Interacts with human MAVS.</text>
</comment>
<comment type="subunit">
    <molecule>Protease 3C</molecule>
    <text evidence="4">Homodimer; disulfide-linked.</text>
</comment>
<comment type="subunit">
    <molecule>Protein VP1-2A</molecule>
    <text evidence="4">Homopentamer. Homooligomer.</text>
</comment>
<comment type="subunit">
    <molecule>Capsid protein VP1</molecule>
    <text evidence="4">Interacts with capsid protein VP2. Interacts with capsid protein VP3.</text>
</comment>
<comment type="subunit">
    <molecule>Capsid protein VP2</molecule>
    <text evidence="4">Interacts with capsid protein VP1. Interacts with capsid protein VP3.</text>
</comment>
<comment type="subunit">
    <molecule>Capsid protein VP3</molecule>
    <text evidence="4">Interacts with capsid protein VP1. Interacts with capsid protein VP2.</text>
</comment>
<comment type="subcellular location">
    <molecule>Capsid protein VP2</molecule>
    <subcellularLocation>
        <location evidence="4">Virion</location>
    </subcellularLocation>
    <subcellularLocation>
        <location evidence="4">Host endosome</location>
        <location evidence="4">Host multivesicular body</location>
    </subcellularLocation>
    <text evidence="4">The egress of newly formed virions occurs through an exosome-like mechanism involving endosomal budding of viral capsids into multivesicular bodies.</text>
</comment>
<comment type="subcellular location">
    <molecule>Capsid protein VP3</molecule>
    <subcellularLocation>
        <location evidence="4">Virion</location>
    </subcellularLocation>
    <subcellularLocation>
        <location evidence="4">Host endosome</location>
        <location evidence="4">Host multivesicular body</location>
    </subcellularLocation>
    <text evidence="4">The egress of newly formed virions occurs through an exosome-like mechanism involving endosomal budding of viral capsids into multivesicular bodies.</text>
</comment>
<comment type="subcellular location">
    <molecule>Capsid protein VP1</molecule>
    <subcellularLocation>
        <location evidence="4">Virion</location>
    </subcellularLocation>
    <subcellularLocation>
        <location evidence="4">Host endosome</location>
        <location evidence="4">Host multivesicular body</location>
    </subcellularLocation>
    <text evidence="4">The egress of newly formed virions occurs through an exosome-like mechanism involving endosomal budding of viral capsids into multivesicular bodies.</text>
</comment>
<comment type="subcellular location">
    <molecule>Capsid protein VP4</molecule>
    <subcellularLocation>
        <location evidence="4">Virion</location>
    </subcellularLocation>
    <text evidence="4">Present in the full mature virion. The egress of newly formed virions occurs through an exosome-like mechanism involving endosomal budding of viral capsids into multivesicular bodies.</text>
</comment>
<comment type="subcellular location">
    <molecule>Protein 2B</molecule>
    <subcellularLocation>
        <location evidence="4">Host membrane</location>
        <topology evidence="4">Peripheral membrane protein</topology>
    </subcellularLocation>
    <text evidence="4">Probably localizes to intracellular membrane vesicles that are induced after virus infection as the site for viral RNA replication.</text>
</comment>
<comment type="subcellular location">
    <molecule>Protein 2C</molecule>
    <subcellularLocation>
        <location evidence="4">Host membrane</location>
        <topology evidence="4">Single-pass membrane protein</topology>
    </subcellularLocation>
    <text evidence="4">Probably localizes to intracellular membrane vesicles that are induced after virus infection as the site for viral RNA replication. May associate with membranes through a N-terminal amphipathic helix.</text>
</comment>
<comment type="subcellular location">
    <molecule>Protein 3ABC</molecule>
    <subcellularLocation>
        <location evidence="4">Host membrane</location>
        <topology evidence="5">Single-pass membrane protein</topology>
    </subcellularLocation>
    <subcellularLocation>
        <location evidence="4">Host mitochondrion outer membrane</location>
        <topology evidence="4">Single-pass membrane protein</topology>
    </subcellularLocation>
    <text evidence="4">Probably localizes to intracellular membrane vesicles that are induced after virus infection as the site for viral RNA replication.</text>
</comment>
<comment type="subcellular location">
    <molecule>Protein 3AB</molecule>
    <subcellularLocation>
        <location evidence="4">Host membrane</location>
        <topology evidence="5">Single-pass membrane protein</topology>
    </subcellularLocation>
    <text evidence="4">Probably localizes to intracellular membrane vesicles that are induced after virus infection as the site for viral RNA replication.</text>
</comment>
<comment type="subcellular location">
    <molecule>Protein 3A</molecule>
    <subcellularLocation>
        <location evidence="4">Host membrane</location>
        <topology evidence="5">Single-pass membrane protein</topology>
    </subcellularLocation>
    <text evidence="4">Probably localizes to intracellular membrane vesicles that are induced after virus infection as the site for viral RNA replication.</text>
</comment>
<comment type="subcellular location">
    <molecule>Viral protein genome-linked</molecule>
    <subcellularLocation>
        <location evidence="4">Virion</location>
    </subcellularLocation>
</comment>
<comment type="subcellular location">
    <molecule>Protease 3C</molecule>
    <subcellularLocation>
        <location evidence="4">Host cytoplasm</location>
    </subcellularLocation>
</comment>
<comment type="subcellular location">
    <molecule>RNA-directed RNA polymerase 3D-POL</molecule>
    <subcellularLocation>
        <location evidence="4">Host cytoplasmic vesicle membrane</location>
        <topology evidence="4">Peripheral membrane protein</topology>
        <orientation evidence="4">Cytoplasmic side</orientation>
    </subcellularLocation>
    <text evidence="4">Interacts with membranes in a complex with viral protein 3AB. Probably localizes to the surface of intracellular membrane vesicles that are induced after virus infection as the site for viral RNA replication. These vesicles are derived from the endoplasmic reticulum.</text>
</comment>
<comment type="domain">
    <molecule>Protein VP1-2A</molecule>
    <text evidence="4">The assembly signal 2A region mediates pentamerization of P1-2A.</text>
</comment>
<comment type="domain">
    <molecule>Genome polyprotein</molecule>
    <text evidence="4">Late-budding domains (L domains) are short sequence motifs essential for viral particle budding. They recruit proteins of the host ESCRT machinery (Endosomal Sorting Complex Required for Transport) or ESCRT-associated proteins. The genome polyprotein contains two L domains: a tandem of (L)YPX(n)L domain which is known to bind the PDCD6IP/ALIX adaptater protein.</text>
</comment>
<comment type="domain">
    <molecule>Capsid protein VP2</molecule>
    <text evidence="4">Late-budding domains (L domains) are short sequence motifs essential for viral particle budding. They recruit proteins of the host ESCRT machinery (Endosomal Sorting Complex Required for Transport) or ESCRT-associated proteins. Capsid protein VP2 contains two L domains: a tandem of (L)YPX(n)L domain which is known to bind the Alix adaptater protein.</text>
</comment>
<comment type="domain">
    <molecule>Protein 2B</molecule>
    <text evidence="4">The C-terminus displays a membrane-penetrating ability.</text>
</comment>
<comment type="PTM">
    <molecule>Genome polyprotein</molecule>
    <text evidence="4">Specific enzymatic cleavages by viral protease in vivo yield a variety of precursors and mature proteins. Polyprotein processing intermediates are produced, such as P1-2A which is a functional precursor of the structural proteins, VP0 which is a VP4-VP2 precursor, VP1-2A precursor, 3ABC precursor which is a stable and catalytically active precursor of 3A, 3B and 3C proteins, 3AB and 3CD precursors. The assembly signal 2A is removed from VP1-2A by a host protease, possibly host Cathepsin L. This cleavage occurs over a region of 3 amino-acids probably generating VP1 proteins with heterogeneous C-termini.</text>
</comment>
<comment type="PTM">
    <molecule>Capsid protein VP0</molecule>
    <text evidence="3">During virion maturation, immature virions are rendered infectious following cleavage of VP0 into VP4 and VP2. This maturation seems to be an autocatalytic event triggered by the presence of RNA in the capsid and is followed by a conformational change of the particle.</text>
</comment>
<comment type="PTM">
    <molecule>Protein VP1-2A</molecule>
    <text evidence="4">The assembly signal 2A is removed from VP1-2A by a host protease, possibly host Cathepsin L in naked virions. This cleavage does not occur in enveloped virions. This cleavage occurs over a region of 3 amino-acids probably generating VP1 proteins with heterogeneous C-termini.</text>
</comment>
<comment type="PTM">
    <molecule>Viral protein genome-linked</molecule>
    <text evidence="2">VPg is uridylylated prior to priming replication into VPg-pUpU.</text>
</comment>
<comment type="PTM">
    <molecule>Capsid protein VP4</molecule>
    <text evidence="4">Unlike other picornaviruses, does not seem to be myristoylated.</text>
</comment>
<comment type="miscellaneous">
    <molecule>Genome polyprotein</molecule>
    <text evidence="4">The need for an intact eIF4G factor for the initiation of translation of HAV results in an inability to shut off host protein synthesis by a mechanism similar to that of other picornaviruses.</text>
</comment>
<comment type="miscellaneous">
    <molecule>Genome polyprotein</molecule>
    <text evidence="4">During infection, enveloped virions (eHAV) are released from cells. These eHAV are cloaked in host-derived membranes and resemble exosomes. The membrane of eHAV is devoid of viral proteins and thus prevents their neutralization by antibodies. eHAV budding is dependent on ESCRT-associated proteins VPS4B and PDCD6IP/ALIX. eHAV are produced and released in the serum and plasma, but not in bile and feces which only contain the naked, nonenveloped virions. It is likely that eHAV also use HAVCR1 as a functional receptor to infect cells, an evolutionary trait that may enhance HAV infectivity.</text>
</comment>
<comment type="similarity">
    <text evidence="10">Belongs to the picornaviridae polyprotein family.</text>
</comment>
<comment type="caution">
    <text evidence="4">It is uncertain whether Met-1 or Met-3 is the initiator.</text>
</comment>
<organismHost>
    <name type="scientific">Cercopithecus hamlyni</name>
    <name type="common">Owl-faced monkey</name>
    <name type="synonym">Hamlyn's monkey</name>
    <dbReference type="NCBI Taxonomy" id="9536"/>
</organismHost>
<organismHost>
    <name type="scientific">Homo sapiens</name>
    <name type="common">Human</name>
    <dbReference type="NCBI Taxonomy" id="9606"/>
</organismHost>
<organismHost>
    <name type="scientific">Macaca</name>
    <name type="common">macaques</name>
    <dbReference type="NCBI Taxonomy" id="9539"/>
</organismHost>
<organismHost>
    <name type="scientific">Pan troglodytes</name>
    <name type="common">Chimpanzee</name>
    <dbReference type="NCBI Taxonomy" id="9598"/>
</organismHost>
<reference key="1">
    <citation type="journal article" date="2007" name="Virus Res.">
        <title>Full-length sequences of subgenotype IIIA and IIIB hepatitis A virus isolates: Characterization of genotype III HAV genomes.</title>
        <authorList>
            <person name="Endo K."/>
            <person name="Takahashi M."/>
            <person name="Masuko K."/>
            <person name="Inoue K."/>
            <person name="Akahane Y."/>
            <person name="Okamoto H."/>
        </authorList>
    </citation>
    <scope>NUCLEOTIDE SEQUENCE [GENOMIC RNA]</scope>
</reference>
<protein>
    <recommendedName>
        <fullName>Genome polyprotein</fullName>
    </recommendedName>
    <component>
        <recommendedName>
            <fullName>Capsid protein VP0</fullName>
        </recommendedName>
        <alternativeName>
            <fullName>VP4-VP2</fullName>
        </alternativeName>
    </component>
    <component>
        <recommendedName>
            <fullName>Capsid protein VP4</fullName>
        </recommendedName>
        <alternativeName>
            <fullName>P1A</fullName>
        </alternativeName>
        <alternativeName>
            <fullName>Virion protein 4</fullName>
        </alternativeName>
    </component>
    <component>
        <recommendedName>
            <fullName>Capsid protein VP2</fullName>
        </recommendedName>
        <alternativeName>
            <fullName>P1B</fullName>
        </alternativeName>
        <alternativeName>
            <fullName>Virion protein 2</fullName>
        </alternativeName>
    </component>
    <component>
        <recommendedName>
            <fullName>Capsid protein VP3</fullName>
        </recommendedName>
        <alternativeName>
            <fullName>P1C</fullName>
        </alternativeName>
        <alternativeName>
            <fullName>Virion protein 3</fullName>
        </alternativeName>
    </component>
    <component>
        <recommendedName>
            <fullName>Protein VP1-2A</fullName>
        </recommendedName>
        <alternativeName>
            <fullName>VPX</fullName>
        </alternativeName>
    </component>
    <component>
        <recommendedName>
            <fullName>Capsid protein VP1</fullName>
        </recommendedName>
        <alternativeName>
            <fullName>P1D</fullName>
        </alternativeName>
        <alternativeName>
            <fullName>Virion protein 1</fullName>
        </alternativeName>
    </component>
    <component>
        <recommendedName>
            <fullName>Assembly signal 2A</fullName>
        </recommendedName>
        <alternativeName>
            <fullName evidence="4">pX</fullName>
        </alternativeName>
    </component>
    <component>
        <recommendedName>
            <fullName>Protein 2BC</fullName>
        </recommendedName>
    </component>
    <component>
        <recommendedName>
            <fullName>Protein 2B</fullName>
            <shortName>P2B</shortName>
        </recommendedName>
    </component>
    <component>
        <recommendedName>
            <fullName>Protein 2C</fullName>
            <shortName>P2C</shortName>
            <ecNumber>3.6.1.15</ecNumber>
        </recommendedName>
    </component>
    <component>
        <recommendedName>
            <fullName>Protein 3ABCD</fullName>
            <shortName>P3</shortName>
        </recommendedName>
    </component>
    <component>
        <recommendedName>
            <fullName>Protein 3ABC</fullName>
        </recommendedName>
    </component>
    <component>
        <recommendedName>
            <fullName>Protein 3AB</fullName>
        </recommendedName>
    </component>
    <component>
        <recommendedName>
            <fullName>Protein 3A</fullName>
            <shortName>P3A</shortName>
        </recommendedName>
    </component>
    <component>
        <recommendedName>
            <fullName>Viral protein genome-linked</fullName>
            <shortName>VPg</shortName>
        </recommendedName>
        <alternativeName>
            <fullName>Protein 3B</fullName>
            <shortName>P3B</shortName>
        </alternativeName>
    </component>
    <component>
        <recommendedName>
            <fullName>Protein 3CD</fullName>
        </recommendedName>
    </component>
    <component>
        <recommendedName>
            <fullName>Protease 3C</fullName>
            <shortName>P3C</shortName>
            <ecNumber evidence="4">3.4.22.28</ecNumber>
        </recommendedName>
        <alternativeName>
            <fullName>Picornain 3C</fullName>
        </alternativeName>
    </component>
    <component>
        <recommendedName>
            <fullName>RNA-directed RNA polymerase 3D-POL</fullName>
            <shortName>P3D-POL</shortName>
            <ecNumber evidence="4">2.7.7.48</ecNumber>
        </recommendedName>
    </component>
</protein>
<evidence type="ECO:0000250" key="1"/>
<evidence type="ECO:0000250" key="2">
    <source>
        <dbReference type="UniProtKB" id="P03300"/>
    </source>
</evidence>
<evidence type="ECO:0000250" key="3">
    <source>
        <dbReference type="UniProtKB" id="P03303"/>
    </source>
</evidence>
<evidence type="ECO:0000250" key="4">
    <source>
        <dbReference type="UniProtKB" id="P08617"/>
    </source>
</evidence>
<evidence type="ECO:0000255" key="5"/>
<evidence type="ECO:0000255" key="6">
    <source>
        <dbReference type="PROSITE-ProRule" id="PRU00539"/>
    </source>
</evidence>
<evidence type="ECO:0000255" key="7">
    <source>
        <dbReference type="PROSITE-ProRule" id="PRU00551"/>
    </source>
</evidence>
<evidence type="ECO:0000255" key="8">
    <source>
        <dbReference type="PROSITE-ProRule" id="PRU01222"/>
    </source>
</evidence>
<evidence type="ECO:0000256" key="9">
    <source>
        <dbReference type="SAM" id="MobiDB-lite"/>
    </source>
</evidence>
<evidence type="ECO:0000305" key="10"/>
<accession>A5LGW7</accession>
<organism>
    <name type="scientific">Human hepatitis A virus genotype IIIB (isolate HAJ85-1)</name>
    <name type="common">HHAV</name>
    <name type="synonym">Human hepatitis A virus (isolate Human/Japan/HAJ85-1/1985)</name>
    <dbReference type="NCBI Taxonomy" id="474341"/>
    <lineage>
        <taxon>Viruses</taxon>
        <taxon>Riboviria</taxon>
        <taxon>Orthornavirae</taxon>
        <taxon>Pisuviricota</taxon>
        <taxon>Pisoniviricetes</taxon>
        <taxon>Picornavirales</taxon>
        <taxon>Picornaviridae</taxon>
        <taxon>Heptrevirinae</taxon>
        <taxon>Hepatovirus</taxon>
        <taxon>Hepatovirus ahepa</taxon>
        <taxon>Hepatovirus A</taxon>
    </lineage>
</organism>
<name>POLG_HAVJ8</name>
<feature type="chain" id="PRO_0000310636" description="Genome polyprotein">
    <location>
        <begin position="1"/>
        <end position="2228"/>
    </location>
</feature>
<feature type="chain" id="PRO_0000310637" description="Capsid protein VP0">
    <location>
        <begin position="1"/>
        <end position="245"/>
    </location>
</feature>
<feature type="chain" id="PRO_0000310638" description="Capsid protein VP4">
    <location>
        <begin position="1"/>
        <end position="23"/>
    </location>
</feature>
<feature type="chain" id="PRO_0000310639" description="Capsid protein VP2">
    <location>
        <begin position="24"/>
        <end position="245"/>
    </location>
</feature>
<feature type="chain" id="PRO_0000310640" description="Capsid protein VP3">
    <location>
        <begin position="246"/>
        <end position="491"/>
    </location>
</feature>
<feature type="chain" id="PRO_0000310641" description="Protein VP1-2A">
    <location>
        <begin position="492"/>
        <end position="836"/>
    </location>
</feature>
<feature type="chain" id="PRO_0000310642" description="Capsid protein VP1">
    <location>
        <begin position="492"/>
        <end position="765"/>
    </location>
</feature>
<feature type="chain" id="PRO_0000310643" description="Assembly signal 2A">
    <location>
        <begin position="766"/>
        <end position="836"/>
    </location>
</feature>
<feature type="chain" id="PRO_0000310644" description="Protein 2BC">
    <location>
        <begin position="837"/>
        <end position="1422"/>
    </location>
</feature>
<feature type="chain" id="PRO_0000310645" description="Protein 2B">
    <location>
        <begin position="837"/>
        <end position="1087"/>
    </location>
</feature>
<feature type="chain" id="PRO_0000310646" description="Protein 2C">
    <location>
        <begin position="1088"/>
        <end position="1422"/>
    </location>
</feature>
<feature type="chain" id="PRO_0000310647" description="Protein 3ABCD">
    <location>
        <begin position="1423"/>
        <end position="2228"/>
    </location>
</feature>
<feature type="chain" id="PRO_0000310648" description="Protein 3ABC">
    <location>
        <begin position="1423"/>
        <end position="1739"/>
    </location>
</feature>
<feature type="chain" id="PRO_0000310649" description="Protein 3AB">
    <location>
        <begin position="1423"/>
        <end position="1519"/>
    </location>
</feature>
<feature type="chain" id="PRO_0000310650" description="Protein 3A">
    <location>
        <begin position="1423"/>
        <end position="1496"/>
    </location>
</feature>
<feature type="chain" id="PRO_0000310651" description="Viral protein genome-linked">
    <location>
        <begin position="1497"/>
        <end position="1519"/>
    </location>
</feature>
<feature type="chain" id="PRO_0000310652" description="Protein 3CD">
    <location>
        <begin position="1520"/>
        <end position="2228"/>
    </location>
</feature>
<feature type="chain" id="PRO_0000310653" description="Protease 3C">
    <location>
        <begin position="1520"/>
        <end position="1739"/>
    </location>
</feature>
<feature type="chain" id="PRO_0000310654" description="RNA-directed RNA polymerase 3D-POL">
    <location>
        <begin position="1740"/>
        <end position="2228"/>
    </location>
</feature>
<feature type="transmembrane region" description="Helical" evidence="5">
    <location>
        <begin position="1011"/>
        <end position="1031"/>
    </location>
</feature>
<feature type="transmembrane region" description="Helical" evidence="5">
    <location>
        <begin position="1462"/>
        <end position="1482"/>
    </location>
</feature>
<feature type="domain" description="SF3 helicase" evidence="7">
    <location>
        <begin position="1204"/>
        <end position="1366"/>
    </location>
</feature>
<feature type="domain" description="Peptidase C3" evidence="8">
    <location>
        <begin position="1514"/>
        <end position="1728"/>
    </location>
</feature>
<feature type="domain" description="RdRp catalytic" evidence="6">
    <location>
        <begin position="1977"/>
        <end position="2098"/>
    </location>
</feature>
<feature type="region of interest" description="Disordered" evidence="9">
    <location>
        <begin position="56"/>
        <end position="76"/>
    </location>
</feature>
<feature type="region of interest" description="Involved in P1-2A pentamerization" evidence="4">
    <location>
        <begin position="766"/>
        <end position="836"/>
    </location>
</feature>
<feature type="region of interest" description="Membrane-penetrating ability" evidence="4">
    <location>
        <begin position="1043"/>
        <end position="1070"/>
    </location>
</feature>
<feature type="coiled-coil region" evidence="5">
    <location>
        <begin position="1127"/>
        <end position="1152"/>
    </location>
</feature>
<feature type="short sequence motif" description="(L)YPX(n)L motif" evidence="4">
    <location>
        <begin position="167"/>
        <end position="171"/>
    </location>
</feature>
<feature type="short sequence motif" description="(L)YPX(n)L motif" evidence="4">
    <location>
        <begin position="200"/>
        <end position="205"/>
    </location>
</feature>
<feature type="active site" description="For protease 3C activity" evidence="8">
    <location>
        <position position="1563"/>
    </location>
</feature>
<feature type="active site" description="For protease 3C activity" evidence="8">
    <location>
        <position position="1603"/>
    </location>
</feature>
<feature type="active site" description="For protease 3C activity" evidence="8">
    <location>
        <position position="1691"/>
    </location>
</feature>
<feature type="binding site" evidence="7">
    <location>
        <begin position="1230"/>
        <end position="1237"/>
    </location>
    <ligand>
        <name>ATP</name>
        <dbReference type="ChEBI" id="CHEBI:30616"/>
    </ligand>
</feature>
<feature type="site" description="Cleavage" evidence="5">
    <location>
        <begin position="23"/>
        <end position="24"/>
    </location>
</feature>
<feature type="site" description="Cleavage; by protease 3C" evidence="4">
    <location>
        <begin position="245"/>
        <end position="246"/>
    </location>
</feature>
<feature type="site" description="Cleavage; by protease 3C" evidence="4">
    <location>
        <begin position="491"/>
        <end position="492"/>
    </location>
</feature>
<feature type="site" description="Cleavage; partial; by host" evidence="4">
    <location>
        <begin position="765"/>
        <end position="766"/>
    </location>
</feature>
<feature type="site" description="Important for VP1 folding and capsid assembly" evidence="4">
    <location>
        <position position="769"/>
    </location>
</feature>
<feature type="site" description="Cleavage; by protease 3C" evidence="4">
    <location>
        <begin position="836"/>
        <end position="837"/>
    </location>
</feature>
<feature type="site" description="Cleavage; by protease 3C" evidence="4">
    <location>
        <begin position="1087"/>
        <end position="1088"/>
    </location>
</feature>
<feature type="site" description="Cleavage; by protease 3C" evidence="4">
    <location>
        <begin position="1422"/>
        <end position="1423"/>
    </location>
</feature>
<feature type="site" description="Cleavage; by protease 3C" evidence="4">
    <location>
        <begin position="1496"/>
        <end position="1497"/>
    </location>
</feature>
<feature type="site" description="Cleavage; by protease 3C" evidence="4">
    <location>
        <begin position="1519"/>
        <end position="1520"/>
    </location>
</feature>
<feature type="site" description="Cleavage; by protease 3C" evidence="4">
    <location>
        <begin position="1739"/>
        <end position="1740"/>
    </location>
</feature>
<feature type="modified residue" description="O-(5'-phospho-RNA)-tyrosine" evidence="1">
    <location>
        <position position="1499"/>
    </location>
</feature>
<feature type="disulfide bond" description="Interchain" evidence="4">
    <location>
        <position position="1543"/>
    </location>
</feature>
<proteinExistence type="inferred from homology"/>
<dbReference type="EC" id="3.6.1.15"/>
<dbReference type="EC" id="3.4.22.28" evidence="4"/>
<dbReference type="EC" id="2.7.7.48" evidence="4"/>
<dbReference type="EMBL" id="AB279735">
    <property type="protein sequence ID" value="BAF63623.1"/>
    <property type="molecule type" value="Genomic_RNA"/>
</dbReference>
<dbReference type="BMRB" id="A5LGW7"/>
<dbReference type="SMR" id="A5LGW7"/>
<dbReference type="MEROPS" id="C03.005"/>
<dbReference type="Proteomes" id="UP000007902">
    <property type="component" value="Genome"/>
</dbReference>
<dbReference type="GO" id="GO:0044162">
    <property type="term" value="C:host cell cytoplasmic vesicle membrane"/>
    <property type="evidence" value="ECO:0007669"/>
    <property type="project" value="UniProtKB-SubCell"/>
</dbReference>
<dbReference type="GO" id="GO:0044193">
    <property type="term" value="C:host cell mitochondrial outer membrane"/>
    <property type="evidence" value="ECO:0007669"/>
    <property type="project" value="UniProtKB-SubCell"/>
</dbReference>
<dbReference type="GO" id="GO:0072494">
    <property type="term" value="C:host multivesicular body"/>
    <property type="evidence" value="ECO:0007669"/>
    <property type="project" value="UniProtKB-SubCell"/>
</dbReference>
<dbReference type="GO" id="GO:0016020">
    <property type="term" value="C:membrane"/>
    <property type="evidence" value="ECO:0007669"/>
    <property type="project" value="UniProtKB-KW"/>
</dbReference>
<dbReference type="GO" id="GO:0039618">
    <property type="term" value="C:T=pseudo3 icosahedral viral capsid"/>
    <property type="evidence" value="ECO:0007669"/>
    <property type="project" value="UniProtKB-KW"/>
</dbReference>
<dbReference type="GO" id="GO:0005524">
    <property type="term" value="F:ATP binding"/>
    <property type="evidence" value="ECO:0007669"/>
    <property type="project" value="UniProtKB-KW"/>
</dbReference>
<dbReference type="GO" id="GO:0015267">
    <property type="term" value="F:channel activity"/>
    <property type="evidence" value="ECO:0007669"/>
    <property type="project" value="UniProtKB-KW"/>
</dbReference>
<dbReference type="GO" id="GO:0004197">
    <property type="term" value="F:cysteine-type endopeptidase activity"/>
    <property type="evidence" value="ECO:0007669"/>
    <property type="project" value="UniProtKB-EC"/>
</dbReference>
<dbReference type="GO" id="GO:0017111">
    <property type="term" value="F:ribonucleoside triphosphate phosphatase activity"/>
    <property type="evidence" value="ECO:0007669"/>
    <property type="project" value="UniProtKB-EC"/>
</dbReference>
<dbReference type="GO" id="GO:0003723">
    <property type="term" value="F:RNA binding"/>
    <property type="evidence" value="ECO:0007669"/>
    <property type="project" value="UniProtKB-KW"/>
</dbReference>
<dbReference type="GO" id="GO:0003724">
    <property type="term" value="F:RNA helicase activity"/>
    <property type="evidence" value="ECO:0007669"/>
    <property type="project" value="InterPro"/>
</dbReference>
<dbReference type="GO" id="GO:0003968">
    <property type="term" value="F:RNA-directed RNA polymerase activity"/>
    <property type="evidence" value="ECO:0007669"/>
    <property type="project" value="UniProtKB-KW"/>
</dbReference>
<dbReference type="GO" id="GO:0005198">
    <property type="term" value="F:structural molecule activity"/>
    <property type="evidence" value="ECO:0007669"/>
    <property type="project" value="InterPro"/>
</dbReference>
<dbReference type="GO" id="GO:0006351">
    <property type="term" value="P:DNA-templated transcription"/>
    <property type="evidence" value="ECO:0007669"/>
    <property type="project" value="InterPro"/>
</dbReference>
<dbReference type="GO" id="GO:0034220">
    <property type="term" value="P:monoatomic ion transmembrane transport"/>
    <property type="evidence" value="ECO:0007669"/>
    <property type="project" value="UniProtKB-KW"/>
</dbReference>
<dbReference type="GO" id="GO:0006508">
    <property type="term" value="P:proteolysis"/>
    <property type="evidence" value="ECO:0007669"/>
    <property type="project" value="UniProtKB-KW"/>
</dbReference>
<dbReference type="GO" id="GO:0046718">
    <property type="term" value="P:symbiont entry into host cell"/>
    <property type="evidence" value="ECO:0007669"/>
    <property type="project" value="UniProtKB-KW"/>
</dbReference>
<dbReference type="GO" id="GO:0039545">
    <property type="term" value="P:symbiont-mediated suppression of host cytoplasmic pattern recognition receptor signaling pathway via inhibition of MAVS activity"/>
    <property type="evidence" value="ECO:0007669"/>
    <property type="project" value="UniProtKB-KW"/>
</dbReference>
<dbReference type="GO" id="GO:0039694">
    <property type="term" value="P:viral RNA genome replication"/>
    <property type="evidence" value="ECO:0007669"/>
    <property type="project" value="InterPro"/>
</dbReference>
<dbReference type="GO" id="GO:0019062">
    <property type="term" value="P:virion attachment to host cell"/>
    <property type="evidence" value="ECO:0007669"/>
    <property type="project" value="UniProtKB-KW"/>
</dbReference>
<dbReference type="CDD" id="cd23215">
    <property type="entry name" value="Hepatovirus_RdRp"/>
    <property type="match status" value="1"/>
</dbReference>
<dbReference type="CDD" id="cd00205">
    <property type="entry name" value="rhv_like"/>
    <property type="match status" value="2"/>
</dbReference>
<dbReference type="FunFam" id="2.60.120.20:FF:000016">
    <property type="entry name" value="Genome polyprotein"/>
    <property type="match status" value="1"/>
</dbReference>
<dbReference type="Gene3D" id="1.20.960.20">
    <property type="match status" value="1"/>
</dbReference>
<dbReference type="Gene3D" id="2.60.120.20">
    <property type="match status" value="3"/>
</dbReference>
<dbReference type="Gene3D" id="3.30.70.270">
    <property type="match status" value="1"/>
</dbReference>
<dbReference type="Gene3D" id="2.40.10.10">
    <property type="entry name" value="Trypsin-like serine proteases"/>
    <property type="match status" value="2"/>
</dbReference>
<dbReference type="InterPro" id="IPR049133">
    <property type="entry name" value="2B_soluble"/>
</dbReference>
<dbReference type="InterPro" id="IPR043502">
    <property type="entry name" value="DNA/RNA_pol_sf"/>
</dbReference>
<dbReference type="InterPro" id="IPR004004">
    <property type="entry name" value="Helic/Pol/Pept_Calicivir-typ"/>
</dbReference>
<dbReference type="InterPro" id="IPR000605">
    <property type="entry name" value="Helicase_SF3_ssDNA/RNA_vir"/>
</dbReference>
<dbReference type="InterPro" id="IPR014759">
    <property type="entry name" value="Helicase_SF3_ssRNA_vir"/>
</dbReference>
<dbReference type="InterPro" id="IPR024354">
    <property type="entry name" value="Hepatitis_A_VP1-2A"/>
</dbReference>
<dbReference type="InterPro" id="IPR044067">
    <property type="entry name" value="PCV_3C_PRO"/>
</dbReference>
<dbReference type="InterPro" id="IPR000199">
    <property type="entry name" value="Peptidase_C3A/C3B_picornavir"/>
</dbReference>
<dbReference type="InterPro" id="IPR009003">
    <property type="entry name" value="Peptidase_S1_PA"/>
</dbReference>
<dbReference type="InterPro" id="IPR043504">
    <property type="entry name" value="Peptidase_S1_PA_chymotrypsin"/>
</dbReference>
<dbReference type="InterPro" id="IPR001676">
    <property type="entry name" value="Picornavirus_capsid"/>
</dbReference>
<dbReference type="InterPro" id="IPR043128">
    <property type="entry name" value="Rev_trsase/Diguanyl_cyclase"/>
</dbReference>
<dbReference type="InterPro" id="IPR033703">
    <property type="entry name" value="Rhv-like"/>
</dbReference>
<dbReference type="InterPro" id="IPR001205">
    <property type="entry name" value="RNA-dir_pol_C"/>
</dbReference>
<dbReference type="InterPro" id="IPR007094">
    <property type="entry name" value="RNA-dir_pol_PSvirus"/>
</dbReference>
<dbReference type="InterPro" id="IPR029053">
    <property type="entry name" value="Viral_coat"/>
</dbReference>
<dbReference type="Pfam" id="PF20758">
    <property type="entry name" value="2B_soluble"/>
    <property type="match status" value="1"/>
</dbReference>
<dbReference type="Pfam" id="PF12944">
    <property type="entry name" value="HAV_VP"/>
    <property type="match status" value="1"/>
</dbReference>
<dbReference type="Pfam" id="PF00548">
    <property type="entry name" value="Peptidase_C3"/>
    <property type="match status" value="1"/>
</dbReference>
<dbReference type="Pfam" id="PF00680">
    <property type="entry name" value="RdRP_1"/>
    <property type="match status" value="1"/>
</dbReference>
<dbReference type="Pfam" id="PF00073">
    <property type="entry name" value="Rhv"/>
    <property type="match status" value="2"/>
</dbReference>
<dbReference type="Pfam" id="PF00910">
    <property type="entry name" value="RNA_helicase"/>
    <property type="match status" value="1"/>
</dbReference>
<dbReference type="PRINTS" id="PR00918">
    <property type="entry name" value="CALICVIRUSNS"/>
</dbReference>
<dbReference type="SUPFAM" id="SSF56672">
    <property type="entry name" value="DNA/RNA polymerases"/>
    <property type="match status" value="1"/>
</dbReference>
<dbReference type="SUPFAM" id="SSF88633">
    <property type="entry name" value="Positive stranded ssRNA viruses"/>
    <property type="match status" value="3"/>
</dbReference>
<dbReference type="SUPFAM" id="SSF50494">
    <property type="entry name" value="Trypsin-like serine proteases"/>
    <property type="match status" value="1"/>
</dbReference>
<dbReference type="PROSITE" id="PS51874">
    <property type="entry name" value="PCV_3C_PRO"/>
    <property type="match status" value="1"/>
</dbReference>
<dbReference type="PROSITE" id="PS50507">
    <property type="entry name" value="RDRP_SSRNA_POS"/>
    <property type="match status" value="1"/>
</dbReference>
<dbReference type="PROSITE" id="PS51218">
    <property type="entry name" value="SF3_HELICASE_2"/>
    <property type="match status" value="1"/>
</dbReference>
<sequence length="2228" mass="251802">MNMSRQGIFQTVGSGLDHILSLADVEEEQMIQSVDRTAVTGASYFTSVDQSSVHTAEVGAHQSEPLKTSVDKPGSKRTQGEKFFLIHSADWLTTHALFHEVAKLDVVKLLYNEQFAVQGLLRYHTYARFGIEIQVQINPTPFQQGGLICAMVPGDQSYGSIASLTVYPHGLLNCNINNVVRIKVPFIYTRGAYHFKDPQYPVWELTIRVWSELNIGTGTSAYTSLNVLARFTDLELHGLTPLSTQMMRNEFRVSTTENVVNLSNYEDARAKMSFALDQEDWKSDASQGGGIKITHFTTWTSIPTLAAQFPFNASDSVGQQIKVIPVDPYFFQMTNTNPEQKCITALASICQMFCFWRGDLVFDFQVFPTKYHSGRLLFCFVPGNELIDVSHITLKQATTAPCAVMDITGVQSTLRFRVPWISDTPYRVNRYTKSSHQKGEYTAIGKLIVYCYNRLTSPSNVASHVRVNVYLSAINLECFAPLYHAMDVTTQVGDDSGGFSTTVSTKQNVPDPQVGITTVRDLKGKANQGKMDVSGVQAPVGAITTIEDPVLAKKVPETFPELKPGESRHTSDHMSIYKFMGRSHFLCTFTFNSNNKEYTFPITLSSTSNPPHGLPSTLRWFFNLFQLYRGPLDLTIIITGATDVDGMAWFTPVGLAVDTPWVEKESALSIDYKTALGAVRFNTRRTGNIQIRLPWYSYLYAVSGALDGLGDKTDSTFGLVSIQIANYNHSDEYLSFSCYLSVTEQSEFYFPRAPLNTNAMMSSETMLDRIALGDLESSVDDPRSEEDRKFESHIEKRKPYKELRLEVGKQRLKYAQEELSNEVLPPPRKIKGVFSQAKISLFYTEDHEIMKFSWKGITADTRALRRFGFSLAAGRSVWTLEMDAGVLTGRLVRVNDEKWTEMKDDKIVSLVEKFTSNKHWSKINFPHGMLDLEEIAANSKEFPNMSETDLCFLLHWLNPKKINLADRMLGMSGIQEIKEKGVGLIGECRAFLDSITTTLKSMMFGFHHSVTVEIINTVLCFVKSGILLYVIQQLNQEEHSHIIGLLRVMNYADIGCSVISCGKVFSKMLETVFNWQMDSRMMELRTQSISNWLRDICSGITIFKSFKDAIYWLYTRIREYYDVNYGNKKDVLNILKDNQQKIERAIEEADNFCVLQIQDVEKFEQYQKGVDLIQKLRTVHSMAQVDPGLTVHLAPLRDCIARVHQKLKNLGSINQAMVTRCEPVVCYLYGKRGGGKSLTSIALATKICKHYGVEPEKNIYTKPVASDYWDGYSGQLVCIIDDIGQNTTDEDWSDFCQLVSGCPMRLNMASLEEKGRHFSSPFIIATSNWSNPSPKTVYVKEAIDRRLHFKVEVKPASFFKNPHNDMLNVNLAKTNDAIKDMSCVDLVMDSHNISLSELLSSLVMTVEIRKQNMSEFMELWSQGMSDDDNDSAVAEFFQSFPSGEPSGSKLSRFFQSVTNHKWVAVGAAVGVLGVLVGGWYVYKHFTKKKEEPIPSEGVYHGVTKPKQVIKLDADPVESQSTLEIAGLVRKNLVQFGVGEKNGCVRWVMNALGIKDDWLLVPSHAYKFEKDYEMMEFYFNRGGTYYSISAGNVVIQSLDVGFQDVVLMKVPTIPKFRDITEHFIKKSDVPRALNRLATLVTTVNGTPMLISEGPLKMEEKATYVHKKNDGTTIDLTVDQAWRGKGEGLPGMCGGALISSNQSIQNAILGIHVAGGNSILVAKLVTQEMFQNIDKKIVESQRIMKVEFTQCSMNVVSKTLFKKSPIHHHIDKNMINFPAVMPFSRAEIDPMAVMLSKYSLPIVDEPEDYKDVSVFFQNKILGKSPLVDDFLDIEMAITGAPGIDAINMDSSPGYPYVQEKLTKRDLIWLDDNGMFLGVHPRLAQRILFNTTMMENCSDLDVVFTTCPKDELRPLDKVLESKTRAIDSCPLDYTILCRMYWGPAISYFHLNPGFHTGVAIGIDPDRQWDQLFKTMIRFGDVGLDLDFSAFDASLSPFMIREAGRILTEMSGAPNHFGEALINTIIYSKHLLYNCCYHVYGSMPSGSPCTALLNSIINNVNLYYVFSKIFKKSPVFFCDAIRILCYGDDVLIVFSRQVQFDNLDSIGQRIVDEFRKLGMTATSADKSVPQLKPVSELTFLKRSFNLVDDRIRPAIAEKTIWSLVAWQRSNAEFEQNLENAQWFAFMHGYEFYQDFYHFVQSCLEKEMIEYRLKSYDWWRMKFNDQCFVCDLS</sequence>
<keyword id="KW-0067">ATP-binding</keyword>
<keyword id="KW-0167">Capsid protein</keyword>
<keyword id="KW-0175">Coiled coil</keyword>
<keyword id="KW-0191">Covalent protein-RNA linkage</keyword>
<keyword id="KW-1015">Disulfide bond</keyword>
<keyword id="KW-0347">Helicase</keyword>
<keyword id="KW-1035">Host cytoplasm</keyword>
<keyword id="KW-1036">Host cytoplasmic vesicle</keyword>
<keyword id="KW-1039">Host endosome</keyword>
<keyword id="KW-1043">Host membrane</keyword>
<keyword id="KW-1045">Host mitochondrion</keyword>
<keyword id="KW-1047">Host mitochondrion outer membrane</keyword>
<keyword id="KW-0945">Host-virus interaction</keyword>
<keyword id="KW-0378">Hydrolase</keyword>
<keyword id="KW-1090">Inhibition of host innate immune response by virus</keyword>
<keyword id="KW-1097">Inhibition of host MAVS by virus</keyword>
<keyword id="KW-1113">Inhibition of host RLR pathway by virus</keyword>
<keyword id="KW-0922">Interferon antiviral system evasion</keyword>
<keyword id="KW-0407">Ion channel</keyword>
<keyword id="KW-0406">Ion transport</keyword>
<keyword id="KW-0472">Membrane</keyword>
<keyword id="KW-0547">Nucleotide-binding</keyword>
<keyword id="KW-0548">Nucleotidyltransferase</keyword>
<keyword id="KW-0597">Phosphoprotein</keyword>
<keyword id="KW-0645">Protease</keyword>
<keyword id="KW-0694">RNA-binding</keyword>
<keyword id="KW-0696">RNA-directed RNA polymerase</keyword>
<keyword id="KW-1143">T=pseudo3 icosahedral capsid protein</keyword>
<keyword id="KW-0788">Thiol protease</keyword>
<keyword id="KW-0808">Transferase</keyword>
<keyword id="KW-0812">Transmembrane</keyword>
<keyword id="KW-1133">Transmembrane helix</keyword>
<keyword id="KW-0813">Transport</keyword>
<keyword id="KW-1161">Viral attachment to host cell</keyword>
<keyword id="KW-0899">Viral immunoevasion</keyword>
<keyword id="KW-1182">Viral ion channel</keyword>
<keyword id="KW-0693">Viral RNA replication</keyword>
<keyword id="KW-0946">Virion</keyword>
<keyword id="KW-1160">Virus entry into host cell</keyword>